<comment type="function">
    <text evidence="1">Catalyzes the addition of meso-diaminopimelic acid to the nucleotide precursor UDP-N-acetylmuramoyl-L-alanyl-D-glutamate (UMAG) in the biosynthesis of bacterial cell-wall peptidoglycan.</text>
</comment>
<comment type="catalytic activity">
    <reaction evidence="1">
        <text>UDP-N-acetyl-alpha-D-muramoyl-L-alanyl-D-glutamate + meso-2,6-diaminopimelate + ATP = UDP-N-acetyl-alpha-D-muramoyl-L-alanyl-gamma-D-glutamyl-meso-2,6-diaminopimelate + ADP + phosphate + H(+)</text>
        <dbReference type="Rhea" id="RHEA:23676"/>
        <dbReference type="ChEBI" id="CHEBI:15378"/>
        <dbReference type="ChEBI" id="CHEBI:30616"/>
        <dbReference type="ChEBI" id="CHEBI:43474"/>
        <dbReference type="ChEBI" id="CHEBI:57791"/>
        <dbReference type="ChEBI" id="CHEBI:83900"/>
        <dbReference type="ChEBI" id="CHEBI:83905"/>
        <dbReference type="ChEBI" id="CHEBI:456216"/>
        <dbReference type="EC" id="6.3.2.13"/>
    </reaction>
</comment>
<comment type="cofactor">
    <cofactor evidence="1">
        <name>Mg(2+)</name>
        <dbReference type="ChEBI" id="CHEBI:18420"/>
    </cofactor>
</comment>
<comment type="pathway">
    <text evidence="1">Cell wall biogenesis; peptidoglycan biosynthesis.</text>
</comment>
<comment type="subcellular location">
    <subcellularLocation>
        <location evidence="1">Cytoplasm</location>
    </subcellularLocation>
</comment>
<comment type="PTM">
    <text evidence="1">Carboxylation is probably crucial for Mg(2+) binding and, consequently, for the gamma-phosphate positioning of ATP.</text>
</comment>
<comment type="similarity">
    <text evidence="1">Belongs to the MurCDEF family. MurE subfamily.</text>
</comment>
<reference key="1">
    <citation type="journal article" date="1997" name="Microbiology">
        <title>Genomic rearrangements during evolution of the obligate intracellular parasite Rickettsia prowazekii as inferred from an analysis of 52015 bp nucleotide sequence.</title>
        <authorList>
            <person name="Andersson J.O."/>
            <person name="Andersson S.G.E."/>
        </authorList>
    </citation>
    <scope>NUCLEOTIDE SEQUENCE [GENOMIC DNA]</scope>
    <source>
        <strain>Madrid E</strain>
    </source>
</reference>
<reference key="2">
    <citation type="journal article" date="1998" name="Nature">
        <title>The genome sequence of Rickettsia prowazekii and the origin of mitochondria.</title>
        <authorList>
            <person name="Andersson S.G.E."/>
            <person name="Zomorodipour A."/>
            <person name="Andersson J.O."/>
            <person name="Sicheritz-Ponten T."/>
            <person name="Alsmark U.C.M."/>
            <person name="Podowski R.M."/>
            <person name="Naeslund A.K."/>
            <person name="Eriksson A.-S."/>
            <person name="Winkler H.H."/>
            <person name="Kurland C.G."/>
        </authorList>
    </citation>
    <scope>NUCLEOTIDE SEQUENCE [LARGE SCALE GENOMIC DNA]</scope>
    <source>
        <strain>Madrid E</strain>
    </source>
</reference>
<accession>O05954</accession>
<gene>
    <name evidence="1" type="primary">murE</name>
    <name type="ordered locus">RP597</name>
</gene>
<sequence>MKYNLNQLFKNHRIKGLSTNSKTVKEDEVFFAIKGQNVDGNDFINDALNNGAVLVITENKNNTAIDKVIYVEDVHKALYEAIEIFYPKKPKNLISVTGTNGKSSVVSYIAQAYSLLKKKAAFIGTIGLEIFGSNNIINDVPSLTTFDYLSFRKVAHNLAEDSIEYLAFEASSHGLEQGRLGKTKVNIVSFTSFSQDHLDYHHTKENYLLAKLKLFTDHLLPSGIAILNSDIEEIEFVKDYLHNNNVKFITVGKKGDLQITKITCSLTGQNIDFIFNNIIYNLHTLIIGSFQASNLLIAALTLYYTGFKFDEIIEALAKVKPIKGRMERIDGTNIFVDYSHTPDSLEKALIELKNIKLHGSKLSVIFGCGGDRDKTKRALMGQIAAKLADNVIITDDNPRFEDPKLIRAEIIRGIGTATYTEIASRAEAIKYGINNLKQDDILLIAGKGHETYQIIGDKKLPFDDSEVVRKYLFEISYTRN</sequence>
<proteinExistence type="inferred from homology"/>
<feature type="chain" id="PRO_0000101934" description="UDP-N-acetylmuramoyl-L-alanyl-D-glutamate--2,6-diaminopimelate ligase">
    <location>
        <begin position="1"/>
        <end position="480"/>
    </location>
</feature>
<feature type="short sequence motif" description="Meso-diaminopimelate recognition motif">
    <location>
        <begin position="396"/>
        <end position="399"/>
    </location>
</feature>
<feature type="binding site" evidence="1">
    <location>
        <position position="21"/>
    </location>
    <ligand>
        <name>UDP-N-acetyl-alpha-D-muramoyl-L-alanyl-D-glutamate</name>
        <dbReference type="ChEBI" id="CHEBI:83900"/>
    </ligand>
</feature>
<feature type="binding site" evidence="1">
    <location>
        <begin position="98"/>
        <end position="104"/>
    </location>
    <ligand>
        <name>ATP</name>
        <dbReference type="ChEBI" id="CHEBI:30616"/>
    </ligand>
</feature>
<feature type="binding site" evidence="1">
    <location>
        <begin position="144"/>
        <end position="145"/>
    </location>
    <ligand>
        <name>UDP-N-acetyl-alpha-D-muramoyl-L-alanyl-D-glutamate</name>
        <dbReference type="ChEBI" id="CHEBI:83900"/>
    </ligand>
</feature>
<feature type="binding site" evidence="1">
    <location>
        <position position="171"/>
    </location>
    <ligand>
        <name>UDP-N-acetyl-alpha-D-muramoyl-L-alanyl-D-glutamate</name>
        <dbReference type="ChEBI" id="CHEBI:83900"/>
    </ligand>
</feature>
<feature type="binding site" evidence="1">
    <location>
        <position position="177"/>
    </location>
    <ligand>
        <name>UDP-N-acetyl-alpha-D-muramoyl-L-alanyl-D-glutamate</name>
        <dbReference type="ChEBI" id="CHEBI:83900"/>
    </ligand>
</feature>
<feature type="binding site" evidence="1">
    <location>
        <position position="179"/>
    </location>
    <ligand>
        <name>UDP-N-acetyl-alpha-D-muramoyl-L-alanyl-D-glutamate</name>
        <dbReference type="ChEBI" id="CHEBI:83900"/>
    </ligand>
</feature>
<feature type="binding site" evidence="1">
    <location>
        <position position="372"/>
    </location>
    <ligand>
        <name>meso-2,6-diaminopimelate</name>
        <dbReference type="ChEBI" id="CHEBI:57791"/>
    </ligand>
</feature>
<feature type="binding site" evidence="1">
    <location>
        <begin position="396"/>
        <end position="399"/>
    </location>
    <ligand>
        <name>meso-2,6-diaminopimelate</name>
        <dbReference type="ChEBI" id="CHEBI:57791"/>
    </ligand>
</feature>
<feature type="binding site" evidence="1">
    <location>
        <position position="446"/>
    </location>
    <ligand>
        <name>meso-2,6-diaminopimelate</name>
        <dbReference type="ChEBI" id="CHEBI:57791"/>
    </ligand>
</feature>
<feature type="binding site" evidence="1">
    <location>
        <position position="450"/>
    </location>
    <ligand>
        <name>meso-2,6-diaminopimelate</name>
        <dbReference type="ChEBI" id="CHEBI:57791"/>
    </ligand>
</feature>
<feature type="modified residue" description="N6-carboxylysine" evidence="1">
    <location>
        <position position="211"/>
    </location>
</feature>
<name>MURE_RICPR</name>
<keyword id="KW-0067">ATP-binding</keyword>
<keyword id="KW-0131">Cell cycle</keyword>
<keyword id="KW-0132">Cell division</keyword>
<keyword id="KW-0133">Cell shape</keyword>
<keyword id="KW-0961">Cell wall biogenesis/degradation</keyword>
<keyword id="KW-0963">Cytoplasm</keyword>
<keyword id="KW-0436">Ligase</keyword>
<keyword id="KW-0460">Magnesium</keyword>
<keyword id="KW-0547">Nucleotide-binding</keyword>
<keyword id="KW-0573">Peptidoglycan synthesis</keyword>
<keyword id="KW-1185">Reference proteome</keyword>
<dbReference type="EC" id="6.3.2.13" evidence="1"/>
<dbReference type="EMBL" id="Y11783">
    <property type="protein sequence ID" value="CAA72473.1"/>
    <property type="molecule type" value="Genomic_DNA"/>
</dbReference>
<dbReference type="EMBL" id="AJ235272">
    <property type="protein sequence ID" value="CAA15041.1"/>
    <property type="molecule type" value="Genomic_DNA"/>
</dbReference>
<dbReference type="PIR" id="G71664">
    <property type="entry name" value="G71664"/>
</dbReference>
<dbReference type="RefSeq" id="NP_220965.1">
    <property type="nucleotide sequence ID" value="NC_000963.1"/>
</dbReference>
<dbReference type="SMR" id="O05954"/>
<dbReference type="STRING" id="272947.gene:17555676"/>
<dbReference type="EnsemblBacteria" id="CAA15041">
    <property type="protein sequence ID" value="CAA15041"/>
    <property type="gene ID" value="CAA15041"/>
</dbReference>
<dbReference type="KEGG" id="rpr:RP597"/>
<dbReference type="PATRIC" id="fig|272947.5.peg.615"/>
<dbReference type="eggNOG" id="COG0769">
    <property type="taxonomic scope" value="Bacteria"/>
</dbReference>
<dbReference type="HOGENOM" id="CLU_022291_3_1_5"/>
<dbReference type="OrthoDB" id="9800958at2"/>
<dbReference type="BRENDA" id="2.1.2.5">
    <property type="organism ID" value="2681"/>
</dbReference>
<dbReference type="UniPathway" id="UPA00219"/>
<dbReference type="Proteomes" id="UP000002480">
    <property type="component" value="Chromosome"/>
</dbReference>
<dbReference type="GO" id="GO:0005737">
    <property type="term" value="C:cytoplasm"/>
    <property type="evidence" value="ECO:0007669"/>
    <property type="project" value="UniProtKB-SubCell"/>
</dbReference>
<dbReference type="GO" id="GO:0005524">
    <property type="term" value="F:ATP binding"/>
    <property type="evidence" value="ECO:0007669"/>
    <property type="project" value="UniProtKB-UniRule"/>
</dbReference>
<dbReference type="GO" id="GO:0000287">
    <property type="term" value="F:magnesium ion binding"/>
    <property type="evidence" value="ECO:0007669"/>
    <property type="project" value="UniProtKB-UniRule"/>
</dbReference>
<dbReference type="GO" id="GO:0008765">
    <property type="term" value="F:UDP-N-acetylmuramoylalanyl-D-glutamate-2,6-diaminopimelate ligase activity"/>
    <property type="evidence" value="ECO:0007669"/>
    <property type="project" value="UniProtKB-UniRule"/>
</dbReference>
<dbReference type="GO" id="GO:0051301">
    <property type="term" value="P:cell division"/>
    <property type="evidence" value="ECO:0007669"/>
    <property type="project" value="UniProtKB-KW"/>
</dbReference>
<dbReference type="GO" id="GO:0071555">
    <property type="term" value="P:cell wall organization"/>
    <property type="evidence" value="ECO:0007669"/>
    <property type="project" value="UniProtKB-KW"/>
</dbReference>
<dbReference type="GO" id="GO:0009252">
    <property type="term" value="P:peptidoglycan biosynthetic process"/>
    <property type="evidence" value="ECO:0007669"/>
    <property type="project" value="UniProtKB-UniRule"/>
</dbReference>
<dbReference type="GO" id="GO:0008360">
    <property type="term" value="P:regulation of cell shape"/>
    <property type="evidence" value="ECO:0007669"/>
    <property type="project" value="UniProtKB-KW"/>
</dbReference>
<dbReference type="Gene3D" id="3.90.190.20">
    <property type="entry name" value="Mur ligase, C-terminal domain"/>
    <property type="match status" value="1"/>
</dbReference>
<dbReference type="Gene3D" id="3.40.1190.10">
    <property type="entry name" value="Mur-like, catalytic domain"/>
    <property type="match status" value="1"/>
</dbReference>
<dbReference type="Gene3D" id="3.40.1390.10">
    <property type="entry name" value="MurE/MurF, N-terminal domain"/>
    <property type="match status" value="1"/>
</dbReference>
<dbReference type="HAMAP" id="MF_00208">
    <property type="entry name" value="MurE"/>
    <property type="match status" value="1"/>
</dbReference>
<dbReference type="InterPro" id="IPR036565">
    <property type="entry name" value="Mur-like_cat_sf"/>
</dbReference>
<dbReference type="InterPro" id="IPR004101">
    <property type="entry name" value="Mur_ligase_C"/>
</dbReference>
<dbReference type="InterPro" id="IPR036615">
    <property type="entry name" value="Mur_ligase_C_dom_sf"/>
</dbReference>
<dbReference type="InterPro" id="IPR013221">
    <property type="entry name" value="Mur_ligase_cen"/>
</dbReference>
<dbReference type="InterPro" id="IPR000713">
    <property type="entry name" value="Mur_ligase_N"/>
</dbReference>
<dbReference type="InterPro" id="IPR035911">
    <property type="entry name" value="MurE/MurF_N"/>
</dbReference>
<dbReference type="InterPro" id="IPR005761">
    <property type="entry name" value="UDP-N-AcMur-Glu-dNH2Pim_ligase"/>
</dbReference>
<dbReference type="NCBIfam" id="TIGR01085">
    <property type="entry name" value="murE"/>
    <property type="match status" value="1"/>
</dbReference>
<dbReference type="NCBIfam" id="NF001124">
    <property type="entry name" value="PRK00139.1-2"/>
    <property type="match status" value="1"/>
</dbReference>
<dbReference type="NCBIfam" id="NF001126">
    <property type="entry name" value="PRK00139.1-4"/>
    <property type="match status" value="1"/>
</dbReference>
<dbReference type="PANTHER" id="PTHR23135">
    <property type="entry name" value="MUR LIGASE FAMILY MEMBER"/>
    <property type="match status" value="1"/>
</dbReference>
<dbReference type="PANTHER" id="PTHR23135:SF4">
    <property type="entry name" value="UDP-N-ACETYLMURAMOYL-L-ALANYL-D-GLUTAMATE--2,6-DIAMINOPIMELATE LIGASE MURE HOMOLOG, CHLOROPLASTIC"/>
    <property type="match status" value="1"/>
</dbReference>
<dbReference type="Pfam" id="PF01225">
    <property type="entry name" value="Mur_ligase"/>
    <property type="match status" value="1"/>
</dbReference>
<dbReference type="Pfam" id="PF02875">
    <property type="entry name" value="Mur_ligase_C"/>
    <property type="match status" value="1"/>
</dbReference>
<dbReference type="Pfam" id="PF08245">
    <property type="entry name" value="Mur_ligase_M"/>
    <property type="match status" value="1"/>
</dbReference>
<dbReference type="SUPFAM" id="SSF53623">
    <property type="entry name" value="MurD-like peptide ligases, catalytic domain"/>
    <property type="match status" value="1"/>
</dbReference>
<dbReference type="SUPFAM" id="SSF53244">
    <property type="entry name" value="MurD-like peptide ligases, peptide-binding domain"/>
    <property type="match status" value="1"/>
</dbReference>
<dbReference type="SUPFAM" id="SSF63418">
    <property type="entry name" value="MurE/MurF N-terminal domain"/>
    <property type="match status" value="1"/>
</dbReference>
<evidence type="ECO:0000255" key="1">
    <source>
        <dbReference type="HAMAP-Rule" id="MF_00208"/>
    </source>
</evidence>
<protein>
    <recommendedName>
        <fullName evidence="1">UDP-N-acetylmuramoyl-L-alanyl-D-glutamate--2,6-diaminopimelate ligase</fullName>
        <ecNumber evidence="1">6.3.2.13</ecNumber>
    </recommendedName>
    <alternativeName>
        <fullName evidence="1">Meso-A2pm-adding enzyme</fullName>
    </alternativeName>
    <alternativeName>
        <fullName evidence="1">Meso-diaminopimelate-adding enzyme</fullName>
    </alternativeName>
    <alternativeName>
        <fullName evidence="1">UDP-MurNAc-L-Ala-D-Glu:meso-diaminopimelate ligase</fullName>
    </alternativeName>
    <alternativeName>
        <fullName evidence="1">UDP-MurNAc-tripeptide synthetase</fullName>
    </alternativeName>
    <alternativeName>
        <fullName evidence="1">UDP-N-acetylmuramyl-tripeptide synthetase</fullName>
    </alternativeName>
</protein>
<organism>
    <name type="scientific">Rickettsia prowazekii (strain Madrid E)</name>
    <dbReference type="NCBI Taxonomy" id="272947"/>
    <lineage>
        <taxon>Bacteria</taxon>
        <taxon>Pseudomonadati</taxon>
        <taxon>Pseudomonadota</taxon>
        <taxon>Alphaproteobacteria</taxon>
        <taxon>Rickettsiales</taxon>
        <taxon>Rickettsiaceae</taxon>
        <taxon>Rickettsieae</taxon>
        <taxon>Rickettsia</taxon>
        <taxon>typhus group</taxon>
    </lineage>
</organism>